<proteinExistence type="evidence at transcript level"/>
<feature type="chain" id="PRO_0000304985" description="UPF0488 protein C8orf33 homolog">
    <location>
        <begin position="1"/>
        <end position="215"/>
    </location>
</feature>
<feature type="region of interest" description="Disordered" evidence="1">
    <location>
        <begin position="1"/>
        <end position="72"/>
    </location>
</feature>
<feature type="region of interest" description="Disordered" evidence="1">
    <location>
        <begin position="87"/>
        <end position="111"/>
    </location>
</feature>
<feature type="region of interest" description="Disordered" evidence="1">
    <location>
        <begin position="158"/>
        <end position="199"/>
    </location>
</feature>
<feature type="compositionally biased region" description="Basic residues" evidence="1">
    <location>
        <begin position="29"/>
        <end position="39"/>
    </location>
</feature>
<feature type="compositionally biased region" description="Basic and acidic residues" evidence="1">
    <location>
        <begin position="40"/>
        <end position="63"/>
    </location>
</feature>
<feature type="compositionally biased region" description="Basic and acidic residues" evidence="1">
    <location>
        <begin position="167"/>
        <end position="178"/>
    </location>
</feature>
<feature type="compositionally biased region" description="Basic and acidic residues" evidence="1">
    <location>
        <begin position="188"/>
        <end position="199"/>
    </location>
</feature>
<accession>Q5BJC4</accession>
<reference key="1">
    <citation type="submission" date="2005-03" db="EMBL/GenBank/DDBJ databases">
        <authorList>
            <consortium name="NIH - Zebrafish Gene Collection (ZGC) project"/>
        </authorList>
    </citation>
    <scope>NUCLEOTIDE SEQUENCE [LARGE SCALE MRNA]</scope>
    <source>
        <tissue>Embryo</tissue>
    </source>
</reference>
<sequence length="215" mass="24511">MLEDEKITDAQSGEADPAITPSSVASASAKKHKKKKKKKAGEGKDDQQRETKTTEGETAKQETSELTPDEQLSRELDWCIEQLELGLRTQKTSSKQREEASRALKTLRSSKAPLVKKRQVMRAISGDYRKKIEEEKNRQFKLIQSAMTSARVTTVSECKPVFHRRAERNTQPKNKTDGSQETQSSQETNEHTKTEDTKPFVFTKTHDEFCFDFDL</sequence>
<name>CH033_DANRE</name>
<gene>
    <name type="ORF">zgc:112185</name>
</gene>
<evidence type="ECO:0000256" key="1">
    <source>
        <dbReference type="SAM" id="MobiDB-lite"/>
    </source>
</evidence>
<evidence type="ECO:0000305" key="2"/>
<dbReference type="EMBL" id="BC091538">
    <property type="protein sequence ID" value="AAH91538.1"/>
    <property type="molecule type" value="mRNA"/>
</dbReference>
<dbReference type="RefSeq" id="NP_001013472.1">
    <property type="nucleotide sequence ID" value="NM_001013454.1"/>
</dbReference>
<dbReference type="SMR" id="Q5BJC4"/>
<dbReference type="FunCoup" id="Q5BJC4">
    <property type="interactions" value="30"/>
</dbReference>
<dbReference type="STRING" id="7955.ENSDARP00000119789"/>
<dbReference type="PaxDb" id="7955-ENSDARP00000119789"/>
<dbReference type="PeptideAtlas" id="Q5BJC4"/>
<dbReference type="GeneID" id="541326"/>
<dbReference type="KEGG" id="dre:541326"/>
<dbReference type="AGR" id="ZFIN:ZDB-GENE-050320-14"/>
<dbReference type="ZFIN" id="ZDB-GENE-050320-14">
    <property type="gene designation" value="zgc:112185"/>
</dbReference>
<dbReference type="eggNOG" id="ENOG502S1RU">
    <property type="taxonomic scope" value="Eukaryota"/>
</dbReference>
<dbReference type="InParanoid" id="Q5BJC4"/>
<dbReference type="OrthoDB" id="20277at2759"/>
<dbReference type="PhylomeDB" id="Q5BJC4"/>
<dbReference type="PRO" id="PR:Q5BJC4"/>
<dbReference type="Proteomes" id="UP000000437">
    <property type="component" value="Chromosome 24"/>
</dbReference>
<dbReference type="InterPro" id="IPR029274">
    <property type="entry name" value="DUF4615"/>
</dbReference>
<dbReference type="PANTHER" id="PTHR13602">
    <property type="entry name" value="UPF0488 PROTEIN C8ORF33"/>
    <property type="match status" value="1"/>
</dbReference>
<dbReference type="PANTHER" id="PTHR13602:SF2">
    <property type="entry name" value="UPF0488 PROTEIN C8ORF33"/>
    <property type="match status" value="1"/>
</dbReference>
<dbReference type="Pfam" id="PF15393">
    <property type="entry name" value="DUF4615"/>
    <property type="match status" value="1"/>
</dbReference>
<organism>
    <name type="scientific">Danio rerio</name>
    <name type="common">Zebrafish</name>
    <name type="synonym">Brachydanio rerio</name>
    <dbReference type="NCBI Taxonomy" id="7955"/>
    <lineage>
        <taxon>Eukaryota</taxon>
        <taxon>Metazoa</taxon>
        <taxon>Chordata</taxon>
        <taxon>Craniata</taxon>
        <taxon>Vertebrata</taxon>
        <taxon>Euteleostomi</taxon>
        <taxon>Actinopterygii</taxon>
        <taxon>Neopterygii</taxon>
        <taxon>Teleostei</taxon>
        <taxon>Ostariophysi</taxon>
        <taxon>Cypriniformes</taxon>
        <taxon>Danionidae</taxon>
        <taxon>Danioninae</taxon>
        <taxon>Danio</taxon>
    </lineage>
</organism>
<protein>
    <recommendedName>
        <fullName>UPF0488 protein C8orf33 homolog</fullName>
    </recommendedName>
</protein>
<comment type="similarity">
    <text evidence="2">Belongs to the UPF0488 family.</text>
</comment>
<keyword id="KW-1185">Reference proteome</keyword>